<sequence>MNIVFMGSPDFAVPGLEKLYNEPGITIKAVVTQPDRKKGRGHKLRPTPVKQMAHKLGLKVLQTDNINREEFITNLRDLSPEAIVVVAFGQKLGKKVLELPSYGCINLHASLLPRYRGASPIHRAIINGDKVTGVTTMYMDEGWDTGDIIYKKEVKINREDTAGTLHDKLASIGGDLLVKTLNDIEKGVAPREKQSEDKASYAYKIDRKIGELDWSRSSEDIFNLVRGVNPWPGAYTTWKGKLLKIWWVEPLKLTVTENDKKMEAGEVITASQEDGIIVKTGDDAVKIIELQLAGRKKITADKFVLGYNIKEGDKLG</sequence>
<gene>
    <name evidence="1" type="primary">fmt</name>
    <name type="ordered locus">Hore_09900</name>
</gene>
<protein>
    <recommendedName>
        <fullName evidence="1">Methionyl-tRNA formyltransferase</fullName>
        <ecNumber evidence="1">2.1.2.9</ecNumber>
    </recommendedName>
</protein>
<dbReference type="EC" id="2.1.2.9" evidence="1"/>
<dbReference type="EMBL" id="CP001098">
    <property type="protein sequence ID" value="ACL69746.1"/>
    <property type="molecule type" value="Genomic_DNA"/>
</dbReference>
<dbReference type="RefSeq" id="WP_012635931.1">
    <property type="nucleotide sequence ID" value="NC_011899.1"/>
</dbReference>
<dbReference type="SMR" id="B8CWS7"/>
<dbReference type="STRING" id="373903.Hore_09900"/>
<dbReference type="KEGG" id="hor:Hore_09900"/>
<dbReference type="eggNOG" id="COG0223">
    <property type="taxonomic scope" value="Bacteria"/>
</dbReference>
<dbReference type="HOGENOM" id="CLU_033347_1_1_9"/>
<dbReference type="OrthoDB" id="9802815at2"/>
<dbReference type="Proteomes" id="UP000000719">
    <property type="component" value="Chromosome"/>
</dbReference>
<dbReference type="GO" id="GO:0005829">
    <property type="term" value="C:cytosol"/>
    <property type="evidence" value="ECO:0007669"/>
    <property type="project" value="TreeGrafter"/>
</dbReference>
<dbReference type="GO" id="GO:0004479">
    <property type="term" value="F:methionyl-tRNA formyltransferase activity"/>
    <property type="evidence" value="ECO:0007669"/>
    <property type="project" value="UniProtKB-UniRule"/>
</dbReference>
<dbReference type="CDD" id="cd08646">
    <property type="entry name" value="FMT_core_Met-tRNA-FMT_N"/>
    <property type="match status" value="1"/>
</dbReference>
<dbReference type="CDD" id="cd08704">
    <property type="entry name" value="Met_tRNA_FMT_C"/>
    <property type="match status" value="1"/>
</dbReference>
<dbReference type="FunFam" id="3.40.50.12230:FF:000001">
    <property type="entry name" value="Methionyl-tRNA formyltransferase"/>
    <property type="match status" value="1"/>
</dbReference>
<dbReference type="Gene3D" id="3.40.50.12230">
    <property type="match status" value="1"/>
</dbReference>
<dbReference type="HAMAP" id="MF_00182">
    <property type="entry name" value="Formyl_trans"/>
    <property type="match status" value="1"/>
</dbReference>
<dbReference type="InterPro" id="IPR005794">
    <property type="entry name" value="Fmt"/>
</dbReference>
<dbReference type="InterPro" id="IPR005793">
    <property type="entry name" value="Formyl_trans_C"/>
</dbReference>
<dbReference type="InterPro" id="IPR002376">
    <property type="entry name" value="Formyl_transf_N"/>
</dbReference>
<dbReference type="InterPro" id="IPR036477">
    <property type="entry name" value="Formyl_transf_N_sf"/>
</dbReference>
<dbReference type="InterPro" id="IPR011034">
    <property type="entry name" value="Formyl_transferase-like_C_sf"/>
</dbReference>
<dbReference type="InterPro" id="IPR044135">
    <property type="entry name" value="Met-tRNA-FMT_C"/>
</dbReference>
<dbReference type="InterPro" id="IPR041711">
    <property type="entry name" value="Met-tRNA-FMT_N"/>
</dbReference>
<dbReference type="NCBIfam" id="TIGR00460">
    <property type="entry name" value="fmt"/>
    <property type="match status" value="1"/>
</dbReference>
<dbReference type="PANTHER" id="PTHR11138">
    <property type="entry name" value="METHIONYL-TRNA FORMYLTRANSFERASE"/>
    <property type="match status" value="1"/>
</dbReference>
<dbReference type="PANTHER" id="PTHR11138:SF5">
    <property type="entry name" value="METHIONYL-TRNA FORMYLTRANSFERASE, MITOCHONDRIAL"/>
    <property type="match status" value="1"/>
</dbReference>
<dbReference type="Pfam" id="PF02911">
    <property type="entry name" value="Formyl_trans_C"/>
    <property type="match status" value="1"/>
</dbReference>
<dbReference type="Pfam" id="PF00551">
    <property type="entry name" value="Formyl_trans_N"/>
    <property type="match status" value="1"/>
</dbReference>
<dbReference type="SUPFAM" id="SSF50486">
    <property type="entry name" value="FMT C-terminal domain-like"/>
    <property type="match status" value="1"/>
</dbReference>
<dbReference type="SUPFAM" id="SSF53328">
    <property type="entry name" value="Formyltransferase"/>
    <property type="match status" value="1"/>
</dbReference>
<organism>
    <name type="scientific">Halothermothrix orenii (strain H 168 / OCM 544 / DSM 9562)</name>
    <dbReference type="NCBI Taxonomy" id="373903"/>
    <lineage>
        <taxon>Bacteria</taxon>
        <taxon>Bacillati</taxon>
        <taxon>Bacillota</taxon>
        <taxon>Clostridia</taxon>
        <taxon>Halanaerobiales</taxon>
        <taxon>Halothermotrichaceae</taxon>
        <taxon>Halothermothrix</taxon>
    </lineage>
</organism>
<name>FMT_HALOH</name>
<reference key="1">
    <citation type="journal article" date="2009" name="PLoS ONE">
        <title>Genome analysis of the anaerobic thermohalophilic bacterium Halothermothrix orenii.</title>
        <authorList>
            <person name="Mavromatis K."/>
            <person name="Ivanova N."/>
            <person name="Anderson I."/>
            <person name="Lykidis A."/>
            <person name="Hooper S.D."/>
            <person name="Sun H."/>
            <person name="Kunin V."/>
            <person name="Lapidus A."/>
            <person name="Hugenholtz P."/>
            <person name="Patel B."/>
            <person name="Kyrpides N.C."/>
        </authorList>
    </citation>
    <scope>NUCLEOTIDE SEQUENCE [LARGE SCALE GENOMIC DNA]</scope>
    <source>
        <strain>H 168 / OCM 544 / DSM 9562</strain>
    </source>
</reference>
<evidence type="ECO:0000255" key="1">
    <source>
        <dbReference type="HAMAP-Rule" id="MF_00182"/>
    </source>
</evidence>
<proteinExistence type="inferred from homology"/>
<comment type="function">
    <text evidence="1">Attaches a formyl group to the free amino group of methionyl-tRNA(fMet). The formyl group appears to play a dual role in the initiator identity of N-formylmethionyl-tRNA by promoting its recognition by IF2 and preventing the misappropriation of this tRNA by the elongation apparatus.</text>
</comment>
<comment type="catalytic activity">
    <reaction evidence="1">
        <text>L-methionyl-tRNA(fMet) + (6R)-10-formyltetrahydrofolate = N-formyl-L-methionyl-tRNA(fMet) + (6S)-5,6,7,8-tetrahydrofolate + H(+)</text>
        <dbReference type="Rhea" id="RHEA:24380"/>
        <dbReference type="Rhea" id="RHEA-COMP:9952"/>
        <dbReference type="Rhea" id="RHEA-COMP:9953"/>
        <dbReference type="ChEBI" id="CHEBI:15378"/>
        <dbReference type="ChEBI" id="CHEBI:57453"/>
        <dbReference type="ChEBI" id="CHEBI:78530"/>
        <dbReference type="ChEBI" id="CHEBI:78844"/>
        <dbReference type="ChEBI" id="CHEBI:195366"/>
        <dbReference type="EC" id="2.1.2.9"/>
    </reaction>
</comment>
<comment type="similarity">
    <text evidence="1">Belongs to the Fmt family.</text>
</comment>
<keyword id="KW-0648">Protein biosynthesis</keyword>
<keyword id="KW-1185">Reference proteome</keyword>
<keyword id="KW-0808">Transferase</keyword>
<feature type="chain" id="PRO_1000190028" description="Methionyl-tRNA formyltransferase">
    <location>
        <begin position="1"/>
        <end position="316"/>
    </location>
</feature>
<feature type="binding site" evidence="1">
    <location>
        <begin position="110"/>
        <end position="113"/>
    </location>
    <ligand>
        <name>(6S)-5,6,7,8-tetrahydrofolate</name>
        <dbReference type="ChEBI" id="CHEBI:57453"/>
    </ligand>
</feature>
<accession>B8CWS7</accession>